<accession>A5CTZ4</accession>
<gene>
    <name type="ordered locus">CMM_2499</name>
</gene>
<comment type="function">
    <text evidence="1">Heme-binding protein able to scavenge peroxynitrite and to protect free L-tyrosine against peroxynitrite-mediated nitration, by acting as a peroxynitrite isomerase that converts peroxynitrite to nitrate. Therefore, this protein likely plays a role in peroxynitrite sensing and in the detoxification of reactive nitrogen and oxygen species (RNS and ROS, respectively). Is able to bind nitric oxide (NO) in vitro, but may act as a sensor of peroxynitrite levels in vivo.</text>
</comment>
<comment type="catalytic activity">
    <reaction evidence="1">
        <text>peroxynitrite = nitrate</text>
        <dbReference type="Rhea" id="RHEA:63116"/>
        <dbReference type="ChEBI" id="CHEBI:17632"/>
        <dbReference type="ChEBI" id="CHEBI:25941"/>
    </reaction>
    <physiologicalReaction direction="left-to-right" evidence="1">
        <dbReference type="Rhea" id="RHEA:63117"/>
    </physiologicalReaction>
</comment>
<comment type="cofactor">
    <cofactor evidence="1">
        <name>heme b</name>
        <dbReference type="ChEBI" id="CHEBI:60344"/>
    </cofactor>
    <text evidence="1">Binds 1 heme b group per subunit, that coordinates a highly solvent-exposed Fe(III) atom.</text>
</comment>
<comment type="pathway">
    <text evidence="1">Nitrogen metabolism.</text>
</comment>
<comment type="subunit">
    <text evidence="1">Homodimer.</text>
</comment>
<comment type="domain">
    <text evidence="1">Forms a 10-stranded antiparallel beta-barrel structure able to accommodate a hydrophobic ligand in its interior. In fact, this fold hosts the heme group, which is located in a wide surface cleft.</text>
</comment>
<comment type="similarity">
    <text evidence="1">Belongs to the nitrobindin family.</text>
</comment>
<reference key="1">
    <citation type="journal article" date="2008" name="J. Bacteriol.">
        <title>The genome sequence of the tomato-pathogenic actinomycete Clavibacter michiganensis subsp. michiganensis NCPPB382 reveals a large island involved in pathogenicity.</title>
        <authorList>
            <person name="Gartemann K.-H."/>
            <person name="Abt B."/>
            <person name="Bekel T."/>
            <person name="Burger A."/>
            <person name="Engemann J."/>
            <person name="Fluegel M."/>
            <person name="Gaigalat L."/>
            <person name="Goesmann A."/>
            <person name="Graefen I."/>
            <person name="Kalinowski J."/>
            <person name="Kaup O."/>
            <person name="Kirchner O."/>
            <person name="Krause L."/>
            <person name="Linke B."/>
            <person name="McHardy A."/>
            <person name="Meyer F."/>
            <person name="Pohle S."/>
            <person name="Rueckert C."/>
            <person name="Schneiker S."/>
            <person name="Zellermann E.-M."/>
            <person name="Puehler A."/>
            <person name="Eichenlaub R."/>
            <person name="Kaiser O."/>
            <person name="Bartels D."/>
        </authorList>
    </citation>
    <scope>NUCLEOTIDE SEQUENCE [LARGE SCALE GENOMIC DNA]</scope>
    <source>
        <strain>NCPPB 382</strain>
    </source>
</reference>
<name>NB_CLAM3</name>
<evidence type="ECO:0000255" key="1">
    <source>
        <dbReference type="HAMAP-Rule" id="MF_01297"/>
    </source>
</evidence>
<organism>
    <name type="scientific">Clavibacter michiganensis subsp. michiganensis (strain NCPPB 382)</name>
    <dbReference type="NCBI Taxonomy" id="443906"/>
    <lineage>
        <taxon>Bacteria</taxon>
        <taxon>Bacillati</taxon>
        <taxon>Actinomycetota</taxon>
        <taxon>Actinomycetes</taxon>
        <taxon>Micrococcales</taxon>
        <taxon>Microbacteriaceae</taxon>
        <taxon>Clavibacter</taxon>
    </lineage>
</organism>
<keyword id="KW-0349">Heme</keyword>
<keyword id="KW-0408">Iron</keyword>
<keyword id="KW-0413">Isomerase</keyword>
<keyword id="KW-0479">Metal-binding</keyword>
<proteinExistence type="inferred from homology"/>
<sequence length="199" mass="21699">MIEIPTGLPAELVPLSWLLGVWEGTGVVEYAVGDDVVRREFGQRISFSHDGLPHLNYSSYAWVEGDDGPVPFVTETGYWRLRRRVTDGDPGPAMLPPTGERPFTTADEVETLRNADGGFDVEVALVHPGGVSELYVGQVKSARIDLATDAVLRTEGAKAYTGATRLYGLVERDLLWAWDIAALGQPLRTHASGRVSHVD</sequence>
<protein>
    <recommendedName>
        <fullName>Peroxynitrite isomerase</fullName>
        <ecNumber evidence="1">5.99.-.-</ecNumber>
    </recommendedName>
    <alternativeName>
        <fullName>Ferric nitrobindin</fullName>
        <shortName>Nb(III)</shortName>
    </alternativeName>
</protein>
<feature type="chain" id="PRO_0000356897" description="Peroxynitrite isomerase">
    <location>
        <begin position="1"/>
        <end position="199"/>
    </location>
</feature>
<feature type="short sequence motif" description="GXWXGXG" evidence="1">
    <location>
        <begin position="20"/>
        <end position="26"/>
    </location>
</feature>
<feature type="binding site" description="axial binding residue" evidence="1">
    <location>
        <position position="190"/>
    </location>
    <ligand>
        <name>heme b</name>
        <dbReference type="ChEBI" id="CHEBI:60344"/>
    </ligand>
    <ligandPart>
        <name>Fe</name>
        <dbReference type="ChEBI" id="CHEBI:18248"/>
    </ligandPart>
</feature>
<dbReference type="EC" id="5.99.-.-" evidence="1"/>
<dbReference type="EMBL" id="AM711867">
    <property type="protein sequence ID" value="CAN02580.1"/>
    <property type="molecule type" value="Genomic_DNA"/>
</dbReference>
<dbReference type="RefSeq" id="WP_012039187.1">
    <property type="nucleotide sequence ID" value="NC_009480.1"/>
</dbReference>
<dbReference type="SMR" id="A5CTZ4"/>
<dbReference type="KEGG" id="cmi:CMM_2499"/>
<dbReference type="eggNOG" id="COG3485">
    <property type="taxonomic scope" value="Bacteria"/>
</dbReference>
<dbReference type="HOGENOM" id="CLU_085483_0_1_11"/>
<dbReference type="OrthoDB" id="4804006at2"/>
<dbReference type="Proteomes" id="UP000001564">
    <property type="component" value="Chromosome"/>
</dbReference>
<dbReference type="GO" id="GO:0020037">
    <property type="term" value="F:heme binding"/>
    <property type="evidence" value="ECO:0007669"/>
    <property type="project" value="UniProtKB-UniRule"/>
</dbReference>
<dbReference type="GO" id="GO:0046872">
    <property type="term" value="F:metal ion binding"/>
    <property type="evidence" value="ECO:0007669"/>
    <property type="project" value="UniProtKB-KW"/>
</dbReference>
<dbReference type="GO" id="GO:0062213">
    <property type="term" value="F:peroxynitrite isomerase activity"/>
    <property type="evidence" value="ECO:0007669"/>
    <property type="project" value="UniProtKB-UniRule"/>
</dbReference>
<dbReference type="CDD" id="cd07828">
    <property type="entry name" value="lipocalin_heme-bd-THAP4-like"/>
    <property type="match status" value="1"/>
</dbReference>
<dbReference type="Gene3D" id="2.40.128.20">
    <property type="match status" value="1"/>
</dbReference>
<dbReference type="HAMAP" id="MF_01297">
    <property type="entry name" value="nitrobindin"/>
    <property type="match status" value="1"/>
</dbReference>
<dbReference type="InterPro" id="IPR012674">
    <property type="entry name" value="Calycin"/>
</dbReference>
<dbReference type="InterPro" id="IPR022939">
    <property type="entry name" value="Nb(III)_bact/plant"/>
</dbReference>
<dbReference type="InterPro" id="IPR045165">
    <property type="entry name" value="Nitrobindin"/>
</dbReference>
<dbReference type="InterPro" id="IPR014878">
    <property type="entry name" value="THAP4-like_heme-bd"/>
</dbReference>
<dbReference type="PANTHER" id="PTHR15854:SF4">
    <property type="entry name" value="PEROXYNITRITE ISOMERASE THAP4"/>
    <property type="match status" value="1"/>
</dbReference>
<dbReference type="PANTHER" id="PTHR15854">
    <property type="entry name" value="THAP4 PROTEIN"/>
    <property type="match status" value="1"/>
</dbReference>
<dbReference type="Pfam" id="PF08768">
    <property type="entry name" value="THAP4_heme-bd"/>
    <property type="match status" value="1"/>
</dbReference>
<dbReference type="SUPFAM" id="SSF50814">
    <property type="entry name" value="Lipocalins"/>
    <property type="match status" value="1"/>
</dbReference>